<dbReference type="EC" id="7.1.1.-" evidence="1"/>
<dbReference type="EMBL" id="AF494278">
    <property type="protein sequence ID" value="AAM96514.1"/>
    <property type="molecule type" value="Genomic_DNA"/>
</dbReference>
<dbReference type="RefSeq" id="NP_683857.1">
    <property type="nucleotide sequence ID" value="NC_004115.1"/>
</dbReference>
<dbReference type="SMR" id="Q8M9T6"/>
<dbReference type="GeneID" id="860797"/>
<dbReference type="GO" id="GO:0009535">
    <property type="term" value="C:chloroplast thylakoid membrane"/>
    <property type="evidence" value="ECO:0007669"/>
    <property type="project" value="UniProtKB-SubCell"/>
</dbReference>
<dbReference type="GO" id="GO:0003954">
    <property type="term" value="F:NADH dehydrogenase activity"/>
    <property type="evidence" value="ECO:0007669"/>
    <property type="project" value="TreeGrafter"/>
</dbReference>
<dbReference type="GO" id="GO:0016655">
    <property type="term" value="F:oxidoreductase activity, acting on NAD(P)H, quinone or similar compound as acceptor"/>
    <property type="evidence" value="ECO:0007669"/>
    <property type="project" value="UniProtKB-UniRule"/>
</dbReference>
<dbReference type="GO" id="GO:0048038">
    <property type="term" value="F:quinone binding"/>
    <property type="evidence" value="ECO:0007669"/>
    <property type="project" value="UniProtKB-KW"/>
</dbReference>
<dbReference type="GO" id="GO:0009060">
    <property type="term" value="P:aerobic respiration"/>
    <property type="evidence" value="ECO:0007669"/>
    <property type="project" value="TreeGrafter"/>
</dbReference>
<dbReference type="GO" id="GO:0019684">
    <property type="term" value="P:photosynthesis, light reaction"/>
    <property type="evidence" value="ECO:0007669"/>
    <property type="project" value="UniProtKB-UniRule"/>
</dbReference>
<dbReference type="HAMAP" id="MF_01350">
    <property type="entry name" value="NDH1_NuoH"/>
    <property type="match status" value="1"/>
</dbReference>
<dbReference type="InterPro" id="IPR001694">
    <property type="entry name" value="NADH_UbQ_OxRdtase_su1/FPO"/>
</dbReference>
<dbReference type="InterPro" id="IPR018086">
    <property type="entry name" value="NADH_UbQ_OxRdtase_su1_CS"/>
</dbReference>
<dbReference type="NCBIfam" id="NF004741">
    <property type="entry name" value="PRK06076.1-2"/>
    <property type="match status" value="1"/>
</dbReference>
<dbReference type="NCBIfam" id="NF004744">
    <property type="entry name" value="PRK06076.1-5"/>
    <property type="match status" value="1"/>
</dbReference>
<dbReference type="PANTHER" id="PTHR11432">
    <property type="entry name" value="NADH DEHYDROGENASE SUBUNIT 1"/>
    <property type="match status" value="1"/>
</dbReference>
<dbReference type="PANTHER" id="PTHR11432:SF3">
    <property type="entry name" value="NADH-UBIQUINONE OXIDOREDUCTASE CHAIN 1"/>
    <property type="match status" value="1"/>
</dbReference>
<dbReference type="Pfam" id="PF00146">
    <property type="entry name" value="NADHdh"/>
    <property type="match status" value="1"/>
</dbReference>
<dbReference type="PROSITE" id="PS00667">
    <property type="entry name" value="COMPLEX1_ND1_1"/>
    <property type="match status" value="1"/>
</dbReference>
<dbReference type="PROSITE" id="PS00668">
    <property type="entry name" value="COMPLEX1_ND1_2"/>
    <property type="match status" value="1"/>
</dbReference>
<feature type="chain" id="PRO_0000240017" description="NAD(P)H-quinone oxidoreductase subunit 1, chloroplastic">
    <location>
        <begin position="1"/>
        <end position="363"/>
    </location>
</feature>
<feature type="transmembrane region" description="Helical" evidence="1">
    <location>
        <begin position="27"/>
        <end position="47"/>
    </location>
</feature>
<feature type="transmembrane region" description="Helical" evidence="1">
    <location>
        <begin position="93"/>
        <end position="113"/>
    </location>
</feature>
<feature type="transmembrane region" description="Helical" evidence="1">
    <location>
        <begin position="124"/>
        <end position="144"/>
    </location>
</feature>
<feature type="transmembrane region" description="Helical" evidence="1">
    <location>
        <begin position="162"/>
        <end position="182"/>
    </location>
</feature>
<feature type="transmembrane region" description="Helical" evidence="1">
    <location>
        <begin position="200"/>
        <end position="220"/>
    </location>
</feature>
<feature type="transmembrane region" description="Helical" evidence="1">
    <location>
        <begin position="250"/>
        <end position="270"/>
    </location>
</feature>
<feature type="transmembrane region" description="Helical" evidence="1">
    <location>
        <begin position="303"/>
        <end position="323"/>
    </location>
</feature>
<feature type="transmembrane region" description="Helical" evidence="1">
    <location>
        <begin position="343"/>
        <end position="363"/>
    </location>
</feature>
<geneLocation type="chloroplast"/>
<keyword id="KW-0150">Chloroplast</keyword>
<keyword id="KW-0472">Membrane</keyword>
<keyword id="KW-0520">NAD</keyword>
<keyword id="KW-0521">NADP</keyword>
<keyword id="KW-0934">Plastid</keyword>
<keyword id="KW-0618">Plastoquinone</keyword>
<keyword id="KW-0874">Quinone</keyword>
<keyword id="KW-0793">Thylakoid</keyword>
<keyword id="KW-1278">Translocase</keyword>
<keyword id="KW-0812">Transmembrane</keyword>
<keyword id="KW-1133">Transmembrane helix</keyword>
<evidence type="ECO:0000255" key="1">
    <source>
        <dbReference type="HAMAP-Rule" id="MF_01350"/>
    </source>
</evidence>
<gene>
    <name evidence="1" type="primary">ndhA</name>
</gene>
<accession>Q8M9T6</accession>
<comment type="function">
    <text evidence="1">NDH shuttles electrons from NAD(P)H:plastoquinone, via FMN and iron-sulfur (Fe-S) centers, to quinones in the photosynthetic chain and possibly in a chloroplast respiratory chain. The immediate electron acceptor for the enzyme in this species is believed to be plastoquinone. Couples the redox reaction to proton translocation, and thus conserves the redox energy in a proton gradient.</text>
</comment>
<comment type="catalytic activity">
    <reaction evidence="1">
        <text>a plastoquinone + NADH + (n+1) H(+)(in) = a plastoquinol + NAD(+) + n H(+)(out)</text>
        <dbReference type="Rhea" id="RHEA:42608"/>
        <dbReference type="Rhea" id="RHEA-COMP:9561"/>
        <dbReference type="Rhea" id="RHEA-COMP:9562"/>
        <dbReference type="ChEBI" id="CHEBI:15378"/>
        <dbReference type="ChEBI" id="CHEBI:17757"/>
        <dbReference type="ChEBI" id="CHEBI:57540"/>
        <dbReference type="ChEBI" id="CHEBI:57945"/>
        <dbReference type="ChEBI" id="CHEBI:62192"/>
    </reaction>
</comment>
<comment type="catalytic activity">
    <reaction evidence="1">
        <text>a plastoquinone + NADPH + (n+1) H(+)(in) = a plastoquinol + NADP(+) + n H(+)(out)</text>
        <dbReference type="Rhea" id="RHEA:42612"/>
        <dbReference type="Rhea" id="RHEA-COMP:9561"/>
        <dbReference type="Rhea" id="RHEA-COMP:9562"/>
        <dbReference type="ChEBI" id="CHEBI:15378"/>
        <dbReference type="ChEBI" id="CHEBI:17757"/>
        <dbReference type="ChEBI" id="CHEBI:57783"/>
        <dbReference type="ChEBI" id="CHEBI:58349"/>
        <dbReference type="ChEBI" id="CHEBI:62192"/>
    </reaction>
</comment>
<comment type="subunit">
    <text evidence="1">NDH is composed of at least 16 different subunits, 5 of which are encoded in the nucleus.</text>
</comment>
<comment type="subcellular location">
    <subcellularLocation>
        <location evidence="1">Plastid</location>
        <location evidence="1">Chloroplast thylakoid membrane</location>
        <topology evidence="1">Multi-pass membrane protein</topology>
    </subcellularLocation>
</comment>
<comment type="similarity">
    <text evidence="1">Belongs to the complex I subunit 1 family.</text>
</comment>
<proteinExistence type="inferred from homology"/>
<protein>
    <recommendedName>
        <fullName evidence="1">NAD(P)H-quinone oxidoreductase subunit 1, chloroplastic</fullName>
        <ecNumber evidence="1">7.1.1.-</ecNumber>
    </recommendedName>
    <alternativeName>
        <fullName evidence="1">NAD(P)H dehydrogenase subunit 1</fullName>
        <shortName evidence="1">NDH subunit 1</shortName>
    </alternativeName>
    <alternativeName>
        <fullName evidence="1">NADH-plastoquinone oxidoreductase subunit 1</fullName>
    </alternativeName>
</protein>
<name>NU1C_CHAGL</name>
<organism>
    <name type="scientific">Chaetosphaeridium globosum</name>
    <name type="common">Charophycean green alga</name>
    <name type="synonym">Herposteiron globosum</name>
    <dbReference type="NCBI Taxonomy" id="96477"/>
    <lineage>
        <taxon>Eukaryota</taxon>
        <taxon>Viridiplantae</taxon>
        <taxon>Streptophyta</taxon>
        <taxon>Coleochaetophyceae</taxon>
        <taxon>Coleochaetales</taxon>
        <taxon>Chaetosphaeridiaceae</taxon>
        <taxon>Chaetosphaeridium</taxon>
    </lineage>
</organism>
<reference key="1">
    <citation type="journal article" date="2002" name="Proc. Natl. Acad. Sci. U.S.A.">
        <title>The chloroplast and mitochondrial genome sequences of the charophyte Chaetosphaeridium globosum: insights into the timing of the events that restructured organelle DNAs within the green algal lineage that led to land plants.</title>
        <authorList>
            <person name="Turmel M."/>
            <person name="Otis C."/>
            <person name="Lemieux C."/>
        </authorList>
    </citation>
    <scope>NUCLEOTIDE SEQUENCE [LARGE SCALE GENOMIC DNA]</scope>
    <source>
        <strain>M1311</strain>
    </source>
</reference>
<sequence length="363" mass="39601">MDLNEKIINILSSVGLTKNLSIFILDLIPILIILLGATLGVLVIVWLERKISAAVQQRIGPEYAGPLGMIQALADGLKLVLKEDIIPAKGDPWLFSVGPALVVVPVFLSYLVVPFGHELILANLGVGILFWIALSSIAPLGLLMAGYGSNNKYSFLGGLRAAAQAISYEIPLALCVLSVALLSHSLSTVDIVEEQSKYGILGWNIWRQPIGFIAFLIASLAECERLPFDLPEAEEELVAGYQTEYCGIKFGLFYVGSYLNLLVSALFVSVLYLGGWNFSLPWINFPILLTENDFALSLNIVNATLGIAITLGKAYLFLFLSILARWTLPRVRMDQLLDLGWKFLLPVSLGNLLLTASLQLALL</sequence>